<organism>
    <name type="scientific">Thermosynechococcus vestitus (strain NIES-2133 / IAM M-273 / BP-1)</name>
    <dbReference type="NCBI Taxonomy" id="197221"/>
    <lineage>
        <taxon>Bacteria</taxon>
        <taxon>Bacillati</taxon>
        <taxon>Cyanobacteriota</taxon>
        <taxon>Cyanophyceae</taxon>
        <taxon>Acaryochloridales</taxon>
        <taxon>Thermosynechococcaceae</taxon>
        <taxon>Thermosynechococcus</taxon>
    </lineage>
</organism>
<keyword id="KW-0249">Electron transport</keyword>
<keyword id="KW-0560">Oxidoreductase</keyword>
<keyword id="KW-1185">Reference proteome</keyword>
<keyword id="KW-0813">Transport</keyword>
<gene>
    <name type="primary">dfa2</name>
    <name type="ordered locus">tll1373</name>
</gene>
<feature type="chain" id="PRO_0000216800" description="Putative diflavin flavoprotein A 2">
    <location>
        <begin position="1"/>
        <end position="578"/>
    </location>
</feature>
<feature type="domain" description="Flavodoxin-like" evidence="2">
    <location>
        <begin position="262"/>
        <end position="404"/>
    </location>
</feature>
<feature type="region of interest" description="Zinc metallo-hydrolase">
    <location>
        <begin position="39"/>
        <end position="233"/>
    </location>
</feature>
<feature type="region of interest" description="Flavodoxin-reductase-like">
    <location>
        <begin position="429"/>
        <end position="578"/>
    </location>
</feature>
<accession>Q8DJ55</accession>
<sequence length="578" mass="63433">MLTETRPRDVQVAEIAPGVLVLRSRTWDRLKFEVEYGRQQGTTSNSYLIQAPQPALLDPPGESFTQIYLQELQRHIDLNQLRYLILSHVNSNRLATVKVLLEKAPQITLVCSKAGAVTLRSAIGEQLHLWIARADTPLELGGDRQLMFIAAATPRWPDGLITVDPQNQIVFSDKLFGAHVCGDSLYDEQWKKLDEDRAYYFECLHAAQTRQVESILDRLAELTPPPRLYAPAHGPIVKFSRSRLFQDYRDWCQAQAEQETKVALFYASAYGNTAILANAIAQGLTAAGVQVEAVNCETTPPAEMQALIHSSDGFIIGSPTLGGHMPTQVQTALGFILAEGSQTKLAGVFGSYGWSGEAIDDIEQKLLDAGYTLGFETLRVKFTPTATDLEKCQIAANEFAQALKKLRKSRTVRPSSLAEAQVDRTEQAVNRVVGSLCVLTTLPEGCFHLTQAAAILVSSVSQASFNPPGITVSLPQEWAESLCLVGDRFVLNILKEGSPLVRQFQQAQRLGEQQLATLGLKSAESGAPILLDALAYLECTVESRMNCGNHWLIYAVVESGELLQTSGLTAIQHRKTSS</sequence>
<comment type="function">
    <text evidence="1">Mediates electron transfer from NADH to oxygen, reducing it to water. This modular protein has 3 redox cofactors, in other organisms the same activity requires 2 or 3 proteins (By similarity).</text>
</comment>
<comment type="cofactor">
    <cofactor>
        <name>Fe cation</name>
        <dbReference type="ChEBI" id="CHEBI:24875"/>
    </cofactor>
    <text>Binds 2 iron ions per subunit.</text>
</comment>
<comment type="miscellaneous">
    <text evidence="1">By homology with NorV in E.coli, may be involved in nitric oxide detoxification.</text>
</comment>
<comment type="similarity">
    <text evidence="3">In the N-terminal section; belongs to the zinc metallo-hydrolase group 3 family.</text>
</comment>
<comment type="similarity">
    <text evidence="3">In the C-terminal section; belongs to the flavodoxin reductase family.</text>
</comment>
<evidence type="ECO:0000250" key="1"/>
<evidence type="ECO:0000255" key="2">
    <source>
        <dbReference type="PROSITE-ProRule" id="PRU00088"/>
    </source>
</evidence>
<evidence type="ECO:0000305" key="3"/>
<proteinExistence type="inferred from homology"/>
<reference key="1">
    <citation type="journal article" date="2002" name="DNA Res.">
        <title>Complete genome structure of the thermophilic cyanobacterium Thermosynechococcus elongatus BP-1.</title>
        <authorList>
            <person name="Nakamura Y."/>
            <person name="Kaneko T."/>
            <person name="Sato S."/>
            <person name="Ikeuchi M."/>
            <person name="Katoh H."/>
            <person name="Sasamoto S."/>
            <person name="Watanabe A."/>
            <person name="Iriguchi M."/>
            <person name="Kawashima K."/>
            <person name="Kimura T."/>
            <person name="Kishida Y."/>
            <person name="Kiyokawa C."/>
            <person name="Kohara M."/>
            <person name="Matsumoto M."/>
            <person name="Matsuno A."/>
            <person name="Nakazaki N."/>
            <person name="Shimpo S."/>
            <person name="Sugimoto M."/>
            <person name="Takeuchi C."/>
            <person name="Yamada M."/>
            <person name="Tabata S."/>
        </authorList>
    </citation>
    <scope>NUCLEOTIDE SEQUENCE [LARGE SCALE GENOMIC DNA]</scope>
    <source>
        <strain>NIES-2133 / IAM M-273 / BP-1</strain>
    </source>
</reference>
<dbReference type="EC" id="1.-.-.-"/>
<dbReference type="EMBL" id="BA000039">
    <property type="protein sequence ID" value="BAC08925.1"/>
    <property type="molecule type" value="Genomic_DNA"/>
</dbReference>
<dbReference type="RefSeq" id="NP_682163.1">
    <property type="nucleotide sequence ID" value="NC_004113.1"/>
</dbReference>
<dbReference type="RefSeq" id="WP_011057213.1">
    <property type="nucleotide sequence ID" value="NC_004113.1"/>
</dbReference>
<dbReference type="SMR" id="Q8DJ55"/>
<dbReference type="STRING" id="197221.gene:10747971"/>
<dbReference type="EnsemblBacteria" id="BAC08925">
    <property type="protein sequence ID" value="BAC08925"/>
    <property type="gene ID" value="BAC08925"/>
</dbReference>
<dbReference type="KEGG" id="tel:tll1373"/>
<dbReference type="PATRIC" id="fig|197221.4.peg.1442"/>
<dbReference type="eggNOG" id="COG0426">
    <property type="taxonomic scope" value="Bacteria"/>
</dbReference>
<dbReference type="eggNOG" id="COG1853">
    <property type="taxonomic scope" value="Bacteria"/>
</dbReference>
<dbReference type="Proteomes" id="UP000000440">
    <property type="component" value="Chromosome"/>
</dbReference>
<dbReference type="GO" id="GO:0009055">
    <property type="term" value="F:electron transfer activity"/>
    <property type="evidence" value="ECO:0007669"/>
    <property type="project" value="InterPro"/>
</dbReference>
<dbReference type="GO" id="GO:0010181">
    <property type="term" value="F:FMN binding"/>
    <property type="evidence" value="ECO:0007669"/>
    <property type="project" value="InterPro"/>
</dbReference>
<dbReference type="GO" id="GO:0016646">
    <property type="term" value="F:oxidoreductase activity, acting on the CH-NH group of donors, NAD or NADP as acceptor"/>
    <property type="evidence" value="ECO:0007669"/>
    <property type="project" value="UniProtKB-ARBA"/>
</dbReference>
<dbReference type="CDD" id="cd07709">
    <property type="entry name" value="flavodiiron_proteins_MBL-fold"/>
    <property type="match status" value="1"/>
</dbReference>
<dbReference type="Gene3D" id="3.40.50.360">
    <property type="match status" value="1"/>
</dbReference>
<dbReference type="Gene3D" id="2.30.110.10">
    <property type="entry name" value="Electron Transport, Fmn-binding Protein, Chain A"/>
    <property type="match status" value="1"/>
</dbReference>
<dbReference type="Gene3D" id="3.60.15.10">
    <property type="entry name" value="Ribonuclease Z/Hydroxyacylglutathione hydrolase-like"/>
    <property type="match status" value="1"/>
</dbReference>
<dbReference type="InterPro" id="IPR002563">
    <property type="entry name" value="Flavin_Rdtase-like_dom"/>
</dbReference>
<dbReference type="InterPro" id="IPR008254">
    <property type="entry name" value="Flavodoxin/NO_synth"/>
</dbReference>
<dbReference type="InterPro" id="IPR001226">
    <property type="entry name" value="Flavodoxin_CS"/>
</dbReference>
<dbReference type="InterPro" id="IPR029039">
    <property type="entry name" value="Flavoprotein-like_sf"/>
</dbReference>
<dbReference type="InterPro" id="IPR001279">
    <property type="entry name" value="Metallo-B-lactamas"/>
</dbReference>
<dbReference type="InterPro" id="IPR051285">
    <property type="entry name" value="NADH_oxidoreductase_modular"/>
</dbReference>
<dbReference type="InterPro" id="IPR045761">
    <property type="entry name" value="ODP_dom"/>
</dbReference>
<dbReference type="InterPro" id="IPR036866">
    <property type="entry name" value="RibonucZ/Hydroxyglut_hydro"/>
</dbReference>
<dbReference type="InterPro" id="IPR012349">
    <property type="entry name" value="Split_barrel_FMN-bd"/>
</dbReference>
<dbReference type="PANTHER" id="PTHR32145">
    <property type="entry name" value="DIFLAVIN FLAVOPROTEIN A 2-RELATED"/>
    <property type="match status" value="1"/>
</dbReference>
<dbReference type="PANTHER" id="PTHR32145:SF32">
    <property type="entry name" value="DIFLAVIN FLAVOPROTEIN A 4-RELATED"/>
    <property type="match status" value="1"/>
</dbReference>
<dbReference type="Pfam" id="PF01613">
    <property type="entry name" value="Flavin_Reduct"/>
    <property type="match status" value="1"/>
</dbReference>
<dbReference type="Pfam" id="PF00258">
    <property type="entry name" value="Flavodoxin_1"/>
    <property type="match status" value="1"/>
</dbReference>
<dbReference type="Pfam" id="PF19583">
    <property type="entry name" value="ODP"/>
    <property type="match status" value="1"/>
</dbReference>
<dbReference type="SMART" id="SM00903">
    <property type="entry name" value="Flavin_Reduct"/>
    <property type="match status" value="1"/>
</dbReference>
<dbReference type="SMART" id="SM00849">
    <property type="entry name" value="Lactamase_B"/>
    <property type="match status" value="1"/>
</dbReference>
<dbReference type="SUPFAM" id="SSF52218">
    <property type="entry name" value="Flavoproteins"/>
    <property type="match status" value="1"/>
</dbReference>
<dbReference type="SUPFAM" id="SSF50475">
    <property type="entry name" value="FMN-binding split barrel"/>
    <property type="match status" value="1"/>
</dbReference>
<dbReference type="SUPFAM" id="SSF56281">
    <property type="entry name" value="Metallo-hydrolase/oxidoreductase"/>
    <property type="match status" value="1"/>
</dbReference>
<dbReference type="PROSITE" id="PS00201">
    <property type="entry name" value="FLAVODOXIN"/>
    <property type="match status" value="1"/>
</dbReference>
<dbReference type="PROSITE" id="PS50902">
    <property type="entry name" value="FLAVODOXIN_LIKE"/>
    <property type="match status" value="1"/>
</dbReference>
<protein>
    <recommendedName>
        <fullName>Putative diflavin flavoprotein A 2</fullName>
        <ecNumber>1.-.-.-</ecNumber>
    </recommendedName>
</protein>
<name>DFA2_THEVB</name>